<keyword id="KW-0002">3D-structure</keyword>
<keyword id="KW-0025">Alternative splicing</keyword>
<keyword id="KW-1003">Cell membrane</keyword>
<keyword id="KW-0963">Cytoplasm</keyword>
<keyword id="KW-1015">Disulfide bond</keyword>
<keyword id="KW-0325">Glycoprotein</keyword>
<keyword id="KW-0393">Immunoglobulin domain</keyword>
<keyword id="KW-0472">Membrane</keyword>
<keyword id="KW-1267">Proteomics identification</keyword>
<keyword id="KW-1185">Reference proteome</keyword>
<keyword id="KW-0677">Repeat</keyword>
<keyword id="KW-0732">Signal</keyword>
<keyword id="KW-0812">Transmembrane</keyword>
<keyword id="KW-1133">Transmembrane helix</keyword>
<protein>
    <recommendedName>
        <fullName>Transmembrane and immunoglobulin domain-containing protein 1</fullName>
    </recommendedName>
</protein>
<dbReference type="EMBL" id="AK172838">
    <property type="protein sequence ID" value="BAD18803.1"/>
    <property type="molecule type" value="mRNA"/>
</dbReference>
<dbReference type="EMBL" id="AK290266">
    <property type="protein sequence ID" value="BAF82955.1"/>
    <property type="molecule type" value="mRNA"/>
</dbReference>
<dbReference type="EMBL" id="AY358153">
    <property type="protein sequence ID" value="AAQ88520.1"/>
    <property type="molecule type" value="mRNA"/>
</dbReference>
<dbReference type="CCDS" id="CCDS32605.1">
    <molecule id="Q6UXZ0-1"/>
</dbReference>
<dbReference type="CCDS" id="CCDS82099.1">
    <molecule id="Q6UXZ0-2"/>
</dbReference>
<dbReference type="RefSeq" id="NP_001306871.1">
    <molecule id="Q6UXZ0-2"/>
    <property type="nucleotide sequence ID" value="NM_001319942.2"/>
</dbReference>
<dbReference type="RefSeq" id="NP_996663.1">
    <molecule id="Q6UXZ0-1"/>
    <property type="nucleotide sequence ID" value="NM_206832.3"/>
</dbReference>
<dbReference type="RefSeq" id="XP_011523089.1">
    <molecule id="Q6UXZ0-1"/>
    <property type="nucleotide sequence ID" value="XM_011524787.2"/>
</dbReference>
<dbReference type="RefSeq" id="XP_054172011.1">
    <molecule id="Q6UXZ0-1"/>
    <property type="nucleotide sequence ID" value="XM_054316036.1"/>
</dbReference>
<dbReference type="PDB" id="8CD3">
    <property type="method" value="X-ray"/>
    <property type="resolution" value="1.90 A"/>
    <property type="chains" value="A=255-262"/>
</dbReference>
<dbReference type="PDBsum" id="8CD3"/>
<dbReference type="SMR" id="Q6UXZ0"/>
<dbReference type="BioGRID" id="132662">
    <property type="interactions" value="1"/>
</dbReference>
<dbReference type="FunCoup" id="Q6UXZ0">
    <property type="interactions" value="36"/>
</dbReference>
<dbReference type="IntAct" id="Q6UXZ0">
    <property type="interactions" value="29"/>
</dbReference>
<dbReference type="MINT" id="Q6UXZ0"/>
<dbReference type="STRING" id="9606.ENSP00000332404"/>
<dbReference type="GlyCosmos" id="Q6UXZ0">
    <property type="glycosylation" value="5 sites, No reported glycans"/>
</dbReference>
<dbReference type="GlyGen" id="Q6UXZ0">
    <property type="glycosylation" value="5 sites, 6 N-linked glycans (2 sites)"/>
</dbReference>
<dbReference type="iPTMnet" id="Q6UXZ0"/>
<dbReference type="PhosphoSitePlus" id="Q6UXZ0"/>
<dbReference type="BioMuta" id="TMIGD1"/>
<dbReference type="DMDM" id="74758583"/>
<dbReference type="MassIVE" id="Q6UXZ0"/>
<dbReference type="PaxDb" id="9606-ENSP00000332404"/>
<dbReference type="PeptideAtlas" id="Q6UXZ0"/>
<dbReference type="ProteomicsDB" id="67681">
    <molecule id="Q6UXZ0-1"/>
</dbReference>
<dbReference type="ProteomicsDB" id="67682">
    <molecule id="Q6UXZ0-2"/>
</dbReference>
<dbReference type="TopDownProteomics" id="Q6UXZ0-2">
    <molecule id="Q6UXZ0-2"/>
</dbReference>
<dbReference type="Antibodypedia" id="15126">
    <property type="antibodies" value="60 antibodies from 22 providers"/>
</dbReference>
<dbReference type="DNASU" id="388364"/>
<dbReference type="Ensembl" id="ENST00000328886.5">
    <molecule id="Q6UXZ0-1"/>
    <property type="protein sequence ID" value="ENSP00000332404.4"/>
    <property type="gene ID" value="ENSG00000182271.13"/>
</dbReference>
<dbReference type="Ensembl" id="ENST00000538566.6">
    <molecule id="Q6UXZ0-2"/>
    <property type="protein sequence ID" value="ENSP00000446118.2"/>
    <property type="gene ID" value="ENSG00000182271.13"/>
</dbReference>
<dbReference type="GeneID" id="388364"/>
<dbReference type="KEGG" id="hsa:388364"/>
<dbReference type="MANE-Select" id="ENST00000328886.5">
    <property type="protein sequence ID" value="ENSP00000332404.4"/>
    <property type="RefSeq nucleotide sequence ID" value="NM_206832.3"/>
    <property type="RefSeq protein sequence ID" value="NP_996663.1"/>
</dbReference>
<dbReference type="UCSC" id="uc002hfa.1">
    <molecule id="Q6UXZ0-1"/>
    <property type="organism name" value="human"/>
</dbReference>
<dbReference type="AGR" id="HGNC:32431"/>
<dbReference type="CTD" id="388364"/>
<dbReference type="DisGeNET" id="388364"/>
<dbReference type="GeneCards" id="TMIGD1"/>
<dbReference type="HGNC" id="HGNC:32431">
    <property type="gene designation" value="TMIGD1"/>
</dbReference>
<dbReference type="HPA" id="ENSG00000182271">
    <property type="expression patterns" value="Tissue enriched (intestine)"/>
</dbReference>
<dbReference type="neXtProt" id="NX_Q6UXZ0"/>
<dbReference type="OpenTargets" id="ENSG00000182271"/>
<dbReference type="PharmGKB" id="PA142670725"/>
<dbReference type="VEuPathDB" id="HostDB:ENSG00000182271"/>
<dbReference type="eggNOG" id="ENOG502RZZ3">
    <property type="taxonomic scope" value="Eukaryota"/>
</dbReference>
<dbReference type="GeneTree" id="ENSGT00510000048311"/>
<dbReference type="HOGENOM" id="CLU_082747_0_0_1"/>
<dbReference type="InParanoid" id="Q6UXZ0"/>
<dbReference type="OMA" id="TCQLARN"/>
<dbReference type="OrthoDB" id="6106100at2759"/>
<dbReference type="PAN-GO" id="Q6UXZ0">
    <property type="GO annotations" value="1 GO annotation based on evolutionary models"/>
</dbReference>
<dbReference type="PhylomeDB" id="Q6UXZ0"/>
<dbReference type="TreeFam" id="TF336634"/>
<dbReference type="PathwayCommons" id="Q6UXZ0"/>
<dbReference type="SignaLink" id="Q6UXZ0"/>
<dbReference type="BioGRID-ORCS" id="388364">
    <property type="hits" value="7 hits in 1136 CRISPR screens"/>
</dbReference>
<dbReference type="ChiTaRS" id="TMIGD1">
    <property type="organism name" value="human"/>
</dbReference>
<dbReference type="GenomeRNAi" id="388364"/>
<dbReference type="Pharos" id="Q6UXZ0">
    <property type="development level" value="Tbio"/>
</dbReference>
<dbReference type="PRO" id="PR:Q6UXZ0"/>
<dbReference type="Proteomes" id="UP000005640">
    <property type="component" value="Chromosome 17"/>
</dbReference>
<dbReference type="RNAct" id="Q6UXZ0">
    <property type="molecule type" value="protein"/>
</dbReference>
<dbReference type="Bgee" id="ENSG00000182271">
    <property type="expression patterns" value="Expressed in rectum and 30 other cell types or tissues"/>
</dbReference>
<dbReference type="GO" id="GO:0009986">
    <property type="term" value="C:cell surface"/>
    <property type="evidence" value="ECO:0007669"/>
    <property type="project" value="Ensembl"/>
</dbReference>
<dbReference type="GO" id="GO:0005737">
    <property type="term" value="C:cytoplasm"/>
    <property type="evidence" value="ECO:0000314"/>
    <property type="project" value="UniProtKB"/>
</dbReference>
<dbReference type="GO" id="GO:0005829">
    <property type="term" value="C:cytosol"/>
    <property type="evidence" value="ECO:0000314"/>
    <property type="project" value="HPA"/>
</dbReference>
<dbReference type="GO" id="GO:0005739">
    <property type="term" value="C:mitochondrion"/>
    <property type="evidence" value="ECO:0000314"/>
    <property type="project" value="HPA"/>
</dbReference>
<dbReference type="GO" id="GO:0043005">
    <property type="term" value="C:neuron projection"/>
    <property type="evidence" value="ECO:0000318"/>
    <property type="project" value="GO_Central"/>
</dbReference>
<dbReference type="GO" id="GO:0005886">
    <property type="term" value="C:plasma membrane"/>
    <property type="evidence" value="ECO:0000314"/>
    <property type="project" value="UniProtKB"/>
</dbReference>
<dbReference type="GO" id="GO:0098632">
    <property type="term" value="F:cell-cell adhesion mediator activity"/>
    <property type="evidence" value="ECO:0007669"/>
    <property type="project" value="Ensembl"/>
</dbReference>
<dbReference type="GO" id="GO:0042803">
    <property type="term" value="F:protein homodimerization activity"/>
    <property type="evidence" value="ECO:0007669"/>
    <property type="project" value="Ensembl"/>
</dbReference>
<dbReference type="GO" id="GO:1904970">
    <property type="term" value="P:brush border assembly"/>
    <property type="evidence" value="ECO:0007669"/>
    <property type="project" value="Ensembl"/>
</dbReference>
<dbReference type="GO" id="GO:0098743">
    <property type="term" value="P:cell aggregation"/>
    <property type="evidence" value="ECO:0007669"/>
    <property type="project" value="Ensembl"/>
</dbReference>
<dbReference type="GO" id="GO:0016477">
    <property type="term" value="P:cell migration"/>
    <property type="evidence" value="ECO:0007669"/>
    <property type="project" value="Ensembl"/>
</dbReference>
<dbReference type="GO" id="GO:0045216">
    <property type="term" value="P:cell-cell junction organization"/>
    <property type="evidence" value="ECO:0007669"/>
    <property type="project" value="Ensembl"/>
</dbReference>
<dbReference type="GO" id="GO:0071447">
    <property type="term" value="P:cellular response to hydroperoxide"/>
    <property type="evidence" value="ECO:0007669"/>
    <property type="project" value="Ensembl"/>
</dbReference>
<dbReference type="GO" id="GO:0060574">
    <property type="term" value="P:intestinal epithelial cell maturation"/>
    <property type="evidence" value="ECO:0007669"/>
    <property type="project" value="Ensembl"/>
</dbReference>
<dbReference type="GO" id="GO:0043066">
    <property type="term" value="P:negative regulation of apoptotic process"/>
    <property type="evidence" value="ECO:0000315"/>
    <property type="project" value="UniProtKB"/>
</dbReference>
<dbReference type="GO" id="GO:0050680">
    <property type="term" value="P:negative regulation of epithelial cell proliferation"/>
    <property type="evidence" value="ECO:0007669"/>
    <property type="project" value="Ensembl"/>
</dbReference>
<dbReference type="GO" id="GO:0008104">
    <property type="term" value="P:protein localization"/>
    <property type="evidence" value="ECO:0007669"/>
    <property type="project" value="Ensembl"/>
</dbReference>
<dbReference type="GO" id="GO:0030334">
    <property type="term" value="P:regulation of cell migration"/>
    <property type="evidence" value="ECO:0000314"/>
    <property type="project" value="UniProtKB"/>
</dbReference>
<dbReference type="GO" id="GO:0042127">
    <property type="term" value="P:regulation of cell population proliferation"/>
    <property type="evidence" value="ECO:0000314"/>
    <property type="project" value="UniProtKB"/>
</dbReference>
<dbReference type="GO" id="GO:0090559">
    <property type="term" value="P:regulation of membrane permeability"/>
    <property type="evidence" value="ECO:0000315"/>
    <property type="project" value="UniProtKB"/>
</dbReference>
<dbReference type="GO" id="GO:0007584">
    <property type="term" value="P:response to nutrient"/>
    <property type="evidence" value="ECO:0007669"/>
    <property type="project" value="Ensembl"/>
</dbReference>
<dbReference type="CDD" id="cd00096">
    <property type="entry name" value="Ig"/>
    <property type="match status" value="1"/>
</dbReference>
<dbReference type="FunFam" id="2.60.40.10:FF:001938">
    <property type="entry name" value="Transmembrane and immunoglobulin domain-containing protein 1"/>
    <property type="match status" value="1"/>
</dbReference>
<dbReference type="Gene3D" id="2.60.40.10">
    <property type="entry name" value="Immunoglobulins"/>
    <property type="match status" value="2"/>
</dbReference>
<dbReference type="InterPro" id="IPR051275">
    <property type="entry name" value="Cell_adhesion_signaling"/>
</dbReference>
<dbReference type="InterPro" id="IPR007110">
    <property type="entry name" value="Ig-like_dom"/>
</dbReference>
<dbReference type="InterPro" id="IPR036179">
    <property type="entry name" value="Ig-like_dom_sf"/>
</dbReference>
<dbReference type="InterPro" id="IPR013783">
    <property type="entry name" value="Ig-like_fold"/>
</dbReference>
<dbReference type="InterPro" id="IPR013098">
    <property type="entry name" value="Ig_I-set"/>
</dbReference>
<dbReference type="InterPro" id="IPR003599">
    <property type="entry name" value="Ig_sub"/>
</dbReference>
<dbReference type="InterPro" id="IPR003598">
    <property type="entry name" value="Ig_sub2"/>
</dbReference>
<dbReference type="InterPro" id="IPR013151">
    <property type="entry name" value="Immunoglobulin_dom"/>
</dbReference>
<dbReference type="PANTHER" id="PTHR11640:SF31">
    <property type="entry name" value="IRREGULAR CHIASM C-ROUGHEST PROTEIN-RELATED"/>
    <property type="match status" value="1"/>
</dbReference>
<dbReference type="PANTHER" id="PTHR11640">
    <property type="entry name" value="NEPHRIN"/>
    <property type="match status" value="1"/>
</dbReference>
<dbReference type="Pfam" id="PF07679">
    <property type="entry name" value="I-set"/>
    <property type="match status" value="1"/>
</dbReference>
<dbReference type="Pfam" id="PF00047">
    <property type="entry name" value="ig"/>
    <property type="match status" value="1"/>
</dbReference>
<dbReference type="SMART" id="SM00409">
    <property type="entry name" value="IG"/>
    <property type="match status" value="2"/>
</dbReference>
<dbReference type="SMART" id="SM00408">
    <property type="entry name" value="IGc2"/>
    <property type="match status" value="1"/>
</dbReference>
<dbReference type="SUPFAM" id="SSF48726">
    <property type="entry name" value="Immunoglobulin"/>
    <property type="match status" value="2"/>
</dbReference>
<dbReference type="PROSITE" id="PS50835">
    <property type="entry name" value="IG_LIKE"/>
    <property type="match status" value="2"/>
</dbReference>
<organism>
    <name type="scientific">Homo sapiens</name>
    <name type="common">Human</name>
    <dbReference type="NCBI Taxonomy" id="9606"/>
    <lineage>
        <taxon>Eukaryota</taxon>
        <taxon>Metazoa</taxon>
        <taxon>Chordata</taxon>
        <taxon>Craniata</taxon>
        <taxon>Vertebrata</taxon>
        <taxon>Euteleostomi</taxon>
        <taxon>Mammalia</taxon>
        <taxon>Eutheria</taxon>
        <taxon>Euarchontoglires</taxon>
        <taxon>Primates</taxon>
        <taxon>Haplorrhini</taxon>
        <taxon>Catarrhini</taxon>
        <taxon>Hominidae</taxon>
        <taxon>Homo</taxon>
    </lineage>
</organism>
<name>TMIG1_HUMAN</name>
<comment type="function">
    <text evidence="3">May control cell-cell adhesion, cell migration and proliferation, cell morphology, and protects renal epithelial cells from oxidative cell injury to promote cell survival.</text>
</comment>
<comment type="subunit">
    <text evidence="3">Homodimer.</text>
</comment>
<comment type="interaction">
    <interactant intactId="EBI-11792261">
        <id>Q6UXZ0</id>
    </interactant>
    <interactant intactId="EBI-1055977">
        <id>O75531</id>
        <label>BANF1</label>
    </interactant>
    <organismsDiffer>false</organismsDiffer>
    <experiments>7</experiments>
</comment>
<comment type="subcellular location">
    <subcellularLocation>
        <location evidence="3">Cell membrane</location>
        <topology evidence="5">Single-pass type I membrane protein</topology>
    </subcellularLocation>
    <subcellularLocation>
        <location evidence="3">Cytoplasm</location>
    </subcellularLocation>
</comment>
<comment type="alternative products">
    <event type="alternative splicing"/>
    <isoform>
        <id>Q6UXZ0-1</id>
        <name>1</name>
        <sequence type="displayed"/>
    </isoform>
    <isoform>
        <id>Q6UXZ0-2</id>
        <name>2</name>
        <sequence type="described" ref="VSP_017075 VSP_017076"/>
    </isoform>
</comment>
<comment type="PTM">
    <text evidence="3">N-glycosylated.</text>
</comment>
<sequence length="262" mass="29185">MAWKSSVIMQMGRFLLLVILFLPREMTSSVLTVNGKTENYILDTTPGSQASLICAVQNHTREEELLWYREEGRVDLKSGNKINSSSVCVSSISENDNGISFTCRLGRDQSVSVSVVLNVTFPPLLSGNDFQTVEEGSNVKLVCNVKANPQAQMMWYKNSSLLDLEKSRHQIQQTSESFQLSITKVEKPDNGTYSCIAKSSLKTESLDFHLIVKDKTVGVPIEPIIAACVVIFLTLCFGLIARRKKIMKLCMKDKDPHSETAL</sequence>
<gene>
    <name evidence="6" type="primary">TMIGD1</name>
    <name evidence="6" type="synonym">TMIGD</name>
    <name type="ORF">UNQ9372/PRO34164</name>
</gene>
<evidence type="ECO:0000255" key="1"/>
<evidence type="ECO:0000255" key="2">
    <source>
        <dbReference type="PROSITE-ProRule" id="PRU00114"/>
    </source>
</evidence>
<evidence type="ECO:0000269" key="3">
    <source>
    </source>
</evidence>
<evidence type="ECO:0000303" key="4">
    <source>
    </source>
</evidence>
<evidence type="ECO:0000305" key="5"/>
<evidence type="ECO:0000312" key="6">
    <source>
        <dbReference type="HGNC" id="HGNC:32431"/>
    </source>
</evidence>
<proteinExistence type="evidence at protein level"/>
<feature type="signal peptide" evidence="1">
    <location>
        <begin position="1"/>
        <end position="29"/>
    </location>
</feature>
<feature type="chain" id="PRO_0000045790" description="Transmembrane and immunoglobulin domain-containing protein 1">
    <location>
        <begin position="30"/>
        <end position="262"/>
    </location>
</feature>
<feature type="topological domain" description="Extracellular" evidence="1">
    <location>
        <begin position="30"/>
        <end position="220"/>
    </location>
</feature>
<feature type="transmembrane region" description="Helical" evidence="1">
    <location>
        <begin position="221"/>
        <end position="241"/>
    </location>
</feature>
<feature type="topological domain" description="Cytoplasmic" evidence="1">
    <location>
        <begin position="242"/>
        <end position="262"/>
    </location>
</feature>
<feature type="domain" description="Ig-like C2-type 1">
    <location>
        <begin position="30"/>
        <end position="114"/>
    </location>
</feature>
<feature type="domain" description="Ig-like C2-type 2">
    <location>
        <begin position="122"/>
        <end position="207"/>
    </location>
</feature>
<feature type="glycosylation site" description="N-linked (GlcNAc...) asparagine" evidence="1">
    <location>
        <position position="58"/>
    </location>
</feature>
<feature type="glycosylation site" description="N-linked (GlcNAc...) asparagine" evidence="1">
    <location>
        <position position="83"/>
    </location>
</feature>
<feature type="glycosylation site" description="N-linked (GlcNAc...) asparagine" evidence="1">
    <location>
        <position position="118"/>
    </location>
</feature>
<feature type="glycosylation site" description="N-linked (GlcNAc...) asparagine" evidence="1">
    <location>
        <position position="158"/>
    </location>
</feature>
<feature type="glycosylation site" description="N-linked (GlcNAc...) asparagine" evidence="1">
    <location>
        <position position="190"/>
    </location>
</feature>
<feature type="disulfide bond" evidence="2">
    <location>
        <begin position="54"/>
        <end position="103"/>
    </location>
</feature>
<feature type="disulfide bond" evidence="2">
    <location>
        <begin position="143"/>
        <end position="195"/>
    </location>
</feature>
<feature type="splice variant" id="VSP_017075" description="In isoform 2." evidence="4">
    <original>DKTVG</original>
    <variation>ALHEG</variation>
    <location>
        <begin position="214"/>
        <end position="218"/>
    </location>
</feature>
<feature type="splice variant" id="VSP_017076" description="In isoform 2." evidence="4">
    <location>
        <begin position="219"/>
        <end position="262"/>
    </location>
</feature>
<accession>Q6UXZ0</accession>
<accession>A8K2K1</accession>
<accession>Q6ZMC6</accession>
<reference key="1">
    <citation type="journal article" date="2004" name="Nat. Genet.">
        <title>Complete sequencing and characterization of 21,243 full-length human cDNAs.</title>
        <authorList>
            <person name="Ota T."/>
            <person name="Suzuki Y."/>
            <person name="Nishikawa T."/>
            <person name="Otsuki T."/>
            <person name="Sugiyama T."/>
            <person name="Irie R."/>
            <person name="Wakamatsu A."/>
            <person name="Hayashi K."/>
            <person name="Sato H."/>
            <person name="Nagai K."/>
            <person name="Kimura K."/>
            <person name="Makita H."/>
            <person name="Sekine M."/>
            <person name="Obayashi M."/>
            <person name="Nishi T."/>
            <person name="Shibahara T."/>
            <person name="Tanaka T."/>
            <person name="Ishii S."/>
            <person name="Yamamoto J."/>
            <person name="Saito K."/>
            <person name="Kawai Y."/>
            <person name="Isono Y."/>
            <person name="Nakamura Y."/>
            <person name="Nagahari K."/>
            <person name="Murakami K."/>
            <person name="Yasuda T."/>
            <person name="Iwayanagi T."/>
            <person name="Wagatsuma M."/>
            <person name="Shiratori A."/>
            <person name="Sudo H."/>
            <person name="Hosoiri T."/>
            <person name="Kaku Y."/>
            <person name="Kodaira H."/>
            <person name="Kondo H."/>
            <person name="Sugawara M."/>
            <person name="Takahashi M."/>
            <person name="Kanda K."/>
            <person name="Yokoi T."/>
            <person name="Furuya T."/>
            <person name="Kikkawa E."/>
            <person name="Omura Y."/>
            <person name="Abe K."/>
            <person name="Kamihara K."/>
            <person name="Katsuta N."/>
            <person name="Sato K."/>
            <person name="Tanikawa M."/>
            <person name="Yamazaki M."/>
            <person name="Ninomiya K."/>
            <person name="Ishibashi T."/>
            <person name="Yamashita H."/>
            <person name="Murakawa K."/>
            <person name="Fujimori K."/>
            <person name="Tanai H."/>
            <person name="Kimata M."/>
            <person name="Watanabe M."/>
            <person name="Hiraoka S."/>
            <person name="Chiba Y."/>
            <person name="Ishida S."/>
            <person name="Ono Y."/>
            <person name="Takiguchi S."/>
            <person name="Watanabe S."/>
            <person name="Yosida M."/>
            <person name="Hotuta T."/>
            <person name="Kusano J."/>
            <person name="Kanehori K."/>
            <person name="Takahashi-Fujii A."/>
            <person name="Hara H."/>
            <person name="Tanase T.-O."/>
            <person name="Nomura Y."/>
            <person name="Togiya S."/>
            <person name="Komai F."/>
            <person name="Hara R."/>
            <person name="Takeuchi K."/>
            <person name="Arita M."/>
            <person name="Imose N."/>
            <person name="Musashino K."/>
            <person name="Yuuki H."/>
            <person name="Oshima A."/>
            <person name="Sasaki N."/>
            <person name="Aotsuka S."/>
            <person name="Yoshikawa Y."/>
            <person name="Matsunawa H."/>
            <person name="Ichihara T."/>
            <person name="Shiohata N."/>
            <person name="Sano S."/>
            <person name="Moriya S."/>
            <person name="Momiyama H."/>
            <person name="Satoh N."/>
            <person name="Takami S."/>
            <person name="Terashima Y."/>
            <person name="Suzuki O."/>
            <person name="Nakagawa S."/>
            <person name="Senoh A."/>
            <person name="Mizoguchi H."/>
            <person name="Goto Y."/>
            <person name="Shimizu F."/>
            <person name="Wakebe H."/>
            <person name="Hishigaki H."/>
            <person name="Watanabe T."/>
            <person name="Sugiyama A."/>
            <person name="Takemoto M."/>
            <person name="Kawakami B."/>
            <person name="Yamazaki M."/>
            <person name="Watanabe K."/>
            <person name="Kumagai A."/>
            <person name="Itakura S."/>
            <person name="Fukuzumi Y."/>
            <person name="Fujimori Y."/>
            <person name="Komiyama M."/>
            <person name="Tashiro H."/>
            <person name="Tanigami A."/>
            <person name="Fujiwara T."/>
            <person name="Ono T."/>
            <person name="Yamada K."/>
            <person name="Fujii Y."/>
            <person name="Ozaki K."/>
            <person name="Hirao M."/>
            <person name="Ohmori Y."/>
            <person name="Kawabata A."/>
            <person name="Hikiji T."/>
            <person name="Kobatake N."/>
            <person name="Inagaki H."/>
            <person name="Ikema Y."/>
            <person name="Okamoto S."/>
            <person name="Okitani R."/>
            <person name="Kawakami T."/>
            <person name="Noguchi S."/>
            <person name="Itoh T."/>
            <person name="Shigeta K."/>
            <person name="Senba T."/>
            <person name="Matsumura K."/>
            <person name="Nakajima Y."/>
            <person name="Mizuno T."/>
            <person name="Morinaga M."/>
            <person name="Sasaki M."/>
            <person name="Togashi T."/>
            <person name="Oyama M."/>
            <person name="Hata H."/>
            <person name="Watanabe M."/>
            <person name="Komatsu T."/>
            <person name="Mizushima-Sugano J."/>
            <person name="Satoh T."/>
            <person name="Shirai Y."/>
            <person name="Takahashi Y."/>
            <person name="Nakagawa K."/>
            <person name="Okumura K."/>
            <person name="Nagase T."/>
            <person name="Nomura N."/>
            <person name="Kikuchi H."/>
            <person name="Masuho Y."/>
            <person name="Yamashita R."/>
            <person name="Nakai K."/>
            <person name="Yada T."/>
            <person name="Nakamura Y."/>
            <person name="Ohara O."/>
            <person name="Isogai T."/>
            <person name="Sugano S."/>
        </authorList>
    </citation>
    <scope>NUCLEOTIDE SEQUENCE [LARGE SCALE MRNA] (ISOFORMS 1 AND 2)</scope>
    <source>
        <tissue>Colon</tissue>
        <tissue>Ileal mucosa</tissue>
    </source>
</reference>
<reference key="2">
    <citation type="journal article" date="2003" name="Genome Res.">
        <title>The secreted protein discovery initiative (SPDI), a large-scale effort to identify novel human secreted and transmembrane proteins: a bioinformatics assessment.</title>
        <authorList>
            <person name="Clark H.F."/>
            <person name="Gurney A.L."/>
            <person name="Abaya E."/>
            <person name="Baker K."/>
            <person name="Baldwin D.T."/>
            <person name="Brush J."/>
            <person name="Chen J."/>
            <person name="Chow B."/>
            <person name="Chui C."/>
            <person name="Crowley C."/>
            <person name="Currell B."/>
            <person name="Deuel B."/>
            <person name="Dowd P."/>
            <person name="Eaton D."/>
            <person name="Foster J.S."/>
            <person name="Grimaldi C."/>
            <person name="Gu Q."/>
            <person name="Hass P.E."/>
            <person name="Heldens S."/>
            <person name="Huang A."/>
            <person name="Kim H.S."/>
            <person name="Klimowski L."/>
            <person name="Jin Y."/>
            <person name="Johnson S."/>
            <person name="Lee J."/>
            <person name="Lewis L."/>
            <person name="Liao D."/>
            <person name="Mark M.R."/>
            <person name="Robbie E."/>
            <person name="Sanchez C."/>
            <person name="Schoenfeld J."/>
            <person name="Seshagiri S."/>
            <person name="Simmons L."/>
            <person name="Singh J."/>
            <person name="Smith V."/>
            <person name="Stinson J."/>
            <person name="Vagts A."/>
            <person name="Vandlen R.L."/>
            <person name="Watanabe C."/>
            <person name="Wieand D."/>
            <person name="Woods K."/>
            <person name="Xie M.-H."/>
            <person name="Yansura D.G."/>
            <person name="Yi S."/>
            <person name="Yu G."/>
            <person name="Yuan J."/>
            <person name="Zhang M."/>
            <person name="Zhang Z."/>
            <person name="Goddard A.D."/>
            <person name="Wood W.I."/>
            <person name="Godowski P.J."/>
            <person name="Gray A.M."/>
        </authorList>
    </citation>
    <scope>NUCLEOTIDE SEQUENCE [LARGE SCALE MRNA] (ISOFORM 1)</scope>
</reference>
<reference key="3">
    <citation type="journal article" date="2015" name="Am. J. Pathol.">
        <title>TMIGD1 is a novel adhesion molecule that protects epithelial cells from oxidative cell injury.</title>
        <authorList>
            <person name="Arafa E."/>
            <person name="Bondzie P.A."/>
            <person name="Rezazadeh K."/>
            <person name="Meyer R.D."/>
            <person name="Hartsough E."/>
            <person name="Henderson J.M."/>
            <person name="Schwartz J.H."/>
            <person name="Chitalia V."/>
            <person name="Rahimi N."/>
        </authorList>
    </citation>
    <scope>GLYCOSYLATION</scope>
    <scope>SUBCELLULAR LOCATION</scope>
    <scope>SUBUNIT</scope>
    <scope>FUNCTION</scope>
</reference>